<gene>
    <name type="primary">AIM11</name>
    <name type="ordered locus">PAS_chr4_0381</name>
</gene>
<organism>
    <name type="scientific">Komagataella phaffii (strain GS115 / ATCC 20864)</name>
    <name type="common">Yeast</name>
    <name type="synonym">Pichia pastoris</name>
    <dbReference type="NCBI Taxonomy" id="644223"/>
    <lineage>
        <taxon>Eukaryota</taxon>
        <taxon>Fungi</taxon>
        <taxon>Dikarya</taxon>
        <taxon>Ascomycota</taxon>
        <taxon>Saccharomycotina</taxon>
        <taxon>Pichiomycetes</taxon>
        <taxon>Pichiales</taxon>
        <taxon>Pichiaceae</taxon>
        <taxon>Komagataella</taxon>
    </lineage>
</organism>
<name>AIM11_KOMPG</name>
<sequence>MRILLIFFVPSGILDQLFPRISILSTLRVNLTNSPLLTPNLTLYSMVNGFDFSKMFGRKDPELVSKEVKQYNERRFKQMALFYGFTVATFICSKIAYRGVIKRRYVPNYYQHNHVAPPFSFYRDALSAVFHSTSLAITSLGMASTGVLWYYDISSVAEFSFKLKQALGGHDKEQELKKLPEDETVQEIQNSINSYLGDR</sequence>
<reference key="1">
    <citation type="journal article" date="2009" name="Nat. Biotechnol.">
        <title>Genome sequence of the recombinant protein production host Pichia pastoris.</title>
        <authorList>
            <person name="De Schutter K."/>
            <person name="Lin Y.-C."/>
            <person name="Tiels P."/>
            <person name="Van Hecke A."/>
            <person name="Glinka S."/>
            <person name="Weber-Lehmann J."/>
            <person name="Rouze P."/>
            <person name="Van de Peer Y."/>
            <person name="Callewaert N."/>
        </authorList>
    </citation>
    <scope>NUCLEOTIDE SEQUENCE [LARGE SCALE GENOMIC DNA]</scope>
    <source>
        <strain>GS115 / ATCC 20864</strain>
    </source>
</reference>
<dbReference type="EMBL" id="FN392322">
    <property type="protein sequence ID" value="CAY71629.1"/>
    <property type="molecule type" value="Genomic_DNA"/>
</dbReference>
<dbReference type="RefSeq" id="XP_002493808.1">
    <property type="nucleotide sequence ID" value="XM_002493763.1"/>
</dbReference>
<dbReference type="SMR" id="C4R7Q4"/>
<dbReference type="FunCoup" id="C4R7Q4">
    <property type="interactions" value="22"/>
</dbReference>
<dbReference type="EnsemblFungi" id="CAY71629">
    <property type="protein sequence ID" value="CAY71629"/>
    <property type="gene ID" value="PAS_chr4_0381"/>
</dbReference>
<dbReference type="GeneID" id="8200665"/>
<dbReference type="KEGG" id="ppa:PAS_chr4_0381"/>
<dbReference type="eggNOG" id="ENOG502SAK0">
    <property type="taxonomic scope" value="Eukaryota"/>
</dbReference>
<dbReference type="HOGENOM" id="CLU_118700_0_0_1"/>
<dbReference type="InParanoid" id="C4R7Q4"/>
<dbReference type="OMA" id="RFAYKST"/>
<dbReference type="OrthoDB" id="4088121at2759"/>
<dbReference type="Proteomes" id="UP000000314">
    <property type="component" value="Chromosome 4"/>
</dbReference>
<dbReference type="GO" id="GO:0016020">
    <property type="term" value="C:membrane"/>
    <property type="evidence" value="ECO:0007669"/>
    <property type="project" value="UniProtKB-SubCell"/>
</dbReference>
<dbReference type="GO" id="GO:0005739">
    <property type="term" value="C:mitochondrion"/>
    <property type="evidence" value="ECO:0007669"/>
    <property type="project" value="TreeGrafter"/>
</dbReference>
<dbReference type="InterPro" id="IPR038814">
    <property type="entry name" value="AIM11"/>
</dbReference>
<dbReference type="PANTHER" id="PTHR39136">
    <property type="entry name" value="ALTERED INHERITANCE OF MITOCHONDRIA PROTEIN 11"/>
    <property type="match status" value="1"/>
</dbReference>
<dbReference type="PANTHER" id="PTHR39136:SF1">
    <property type="entry name" value="ALTERED INHERITANCE OF MITOCHONDRIA PROTEIN 11"/>
    <property type="match status" value="1"/>
</dbReference>
<keyword id="KW-0472">Membrane</keyword>
<keyword id="KW-1185">Reference proteome</keyword>
<keyword id="KW-0812">Transmembrane</keyword>
<keyword id="KW-1133">Transmembrane helix</keyword>
<feature type="chain" id="PRO_0000405652" description="Altered inheritance of mitochondria protein 11">
    <location>
        <begin position="1"/>
        <end position="199"/>
    </location>
</feature>
<feature type="transmembrane region" description="Helical" evidence="1">
    <location>
        <begin position="79"/>
        <end position="101"/>
    </location>
</feature>
<feature type="transmembrane region" description="Helical" evidence="1">
    <location>
        <begin position="129"/>
        <end position="151"/>
    </location>
</feature>
<protein>
    <recommendedName>
        <fullName>Altered inheritance of mitochondria protein 11</fullName>
    </recommendedName>
</protein>
<comment type="subcellular location">
    <subcellularLocation>
        <location evidence="2">Membrane</location>
        <topology evidence="2">Multi-pass membrane protein</topology>
    </subcellularLocation>
</comment>
<comment type="similarity">
    <text evidence="2">Belongs to the AIM11 family.</text>
</comment>
<evidence type="ECO:0000255" key="1"/>
<evidence type="ECO:0000305" key="2"/>
<proteinExistence type="inferred from homology"/>
<accession>C4R7Q4</accession>